<reference key="1">
    <citation type="submission" date="2000-10" db="EMBL/GenBank/DDBJ databases">
        <title>A rat testis-specific gene including a RING finger domain homolog to HSD-4.</title>
        <authorList>
            <person name="Wang L."/>
            <person name="Gou D."/>
            <person name="Zhang X."/>
        </authorList>
    </citation>
    <scope>NUCLEOTIDE SEQUENCE [MRNA]</scope>
    <source>
        <tissue>Testis</tissue>
    </source>
</reference>
<reference key="2">
    <citation type="journal article" date="2004" name="Genome Res.">
        <title>The status, quality, and expansion of the NIH full-length cDNA project: the Mammalian Gene Collection (MGC).</title>
        <authorList>
            <consortium name="The MGC Project Team"/>
        </authorList>
    </citation>
    <scope>NUCLEOTIDE SEQUENCE [LARGE SCALE MRNA]</scope>
    <source>
        <tissue>Prostate</tissue>
    </source>
</reference>
<evidence type="ECO:0000250" key="1">
    <source>
        <dbReference type="UniProtKB" id="Q8WVD3"/>
    </source>
</evidence>
<evidence type="ECO:0000255" key="2">
    <source>
        <dbReference type="PROSITE-ProRule" id="PRU00042"/>
    </source>
</evidence>
<evidence type="ECO:0000255" key="3">
    <source>
        <dbReference type="PROSITE-ProRule" id="PRU00175"/>
    </source>
</evidence>
<evidence type="ECO:0000255" key="4">
    <source>
        <dbReference type="PROSITE-ProRule" id="PRU01144"/>
    </source>
</evidence>
<evidence type="ECO:0000256" key="5">
    <source>
        <dbReference type="SAM" id="MobiDB-lite"/>
    </source>
</evidence>
<evidence type="ECO:0000303" key="6">
    <source ref="1"/>
</evidence>
<evidence type="ECO:0000305" key="7"/>
<evidence type="ECO:0000312" key="8">
    <source>
        <dbReference type="RGD" id="621485"/>
    </source>
</evidence>
<sequence length="209" mass="24072">MSEELSADTSYTEDDFYCPVCQEVLKTPVRTAACQHVFCRKCFLTAMRESGIHCPLCRGSVTRRERACPERAIDLENIMRRVSGSCRCCSKKIKFYRMRHHYKSCKKYQDEYGVSSVIPNVKISQDSVRSSNRSETSASDNTETYQEDTSSSGHPTFKCPLCQESNFTRQRLLDHCNSNHLFQIVPVNLQLDEETQYQTAVEESFQVNM</sequence>
<organism>
    <name type="scientific">Rattus norvegicus</name>
    <name type="common">Rat</name>
    <dbReference type="NCBI Taxonomy" id="10116"/>
    <lineage>
        <taxon>Eukaryota</taxon>
        <taxon>Metazoa</taxon>
        <taxon>Chordata</taxon>
        <taxon>Craniata</taxon>
        <taxon>Vertebrata</taxon>
        <taxon>Euteleostomi</taxon>
        <taxon>Mammalia</taxon>
        <taxon>Eutheria</taxon>
        <taxon>Euarchontoglires</taxon>
        <taxon>Glires</taxon>
        <taxon>Rodentia</taxon>
        <taxon>Myomorpha</taxon>
        <taxon>Muroidea</taxon>
        <taxon>Muridae</taxon>
        <taxon>Murinae</taxon>
        <taxon>Rattus</taxon>
    </lineage>
</organism>
<feature type="chain" id="PRO_0000261609" description="E3 ubiquitin-protein ligase RNF138">
    <location>
        <begin position="1"/>
        <end position="209"/>
    </location>
</feature>
<feature type="domain" description="UIM" evidence="1">
    <location>
        <begin position="189"/>
        <end position="207"/>
    </location>
</feature>
<feature type="zinc finger region" description="RING-type" evidence="3">
    <location>
        <begin position="18"/>
        <end position="58"/>
    </location>
</feature>
<feature type="zinc finger region" description="C2HC RNF-type" evidence="4">
    <location>
        <begin position="86"/>
        <end position="105"/>
    </location>
</feature>
<feature type="zinc finger region" description="C2H2-type" evidence="2">
    <location>
        <begin position="157"/>
        <end position="180"/>
    </location>
</feature>
<feature type="region of interest" description="Disordered" evidence="5">
    <location>
        <begin position="125"/>
        <end position="154"/>
    </location>
</feature>
<feature type="binding site" evidence="4">
    <location>
        <position position="86"/>
    </location>
    <ligand>
        <name>Zn(2+)</name>
        <dbReference type="ChEBI" id="CHEBI:29105"/>
    </ligand>
</feature>
<feature type="binding site" evidence="4">
    <location>
        <position position="89"/>
    </location>
    <ligand>
        <name>Zn(2+)</name>
        <dbReference type="ChEBI" id="CHEBI:29105"/>
    </ligand>
</feature>
<feature type="binding site" evidence="4">
    <location>
        <position position="101"/>
    </location>
    <ligand>
        <name>Zn(2+)</name>
        <dbReference type="ChEBI" id="CHEBI:29105"/>
    </ligand>
</feature>
<feature type="binding site" evidence="4">
    <location>
        <position position="105"/>
    </location>
    <ligand>
        <name>Zn(2+)</name>
        <dbReference type="ChEBI" id="CHEBI:29105"/>
    </ligand>
</feature>
<feature type="modified residue" description="Phosphothreonine" evidence="1">
    <location>
        <position position="142"/>
    </location>
</feature>
<accession>Q99PD2</accession>
<keyword id="KW-0158">Chromosome</keyword>
<keyword id="KW-0227">DNA damage</keyword>
<keyword id="KW-0234">DNA repair</keyword>
<keyword id="KW-0238">DNA-binding</keyword>
<keyword id="KW-0479">Metal-binding</keyword>
<keyword id="KW-0597">Phosphoprotein</keyword>
<keyword id="KW-1185">Reference proteome</keyword>
<keyword id="KW-0808">Transferase</keyword>
<keyword id="KW-0832">Ubl conjugation</keyword>
<keyword id="KW-0833">Ubl conjugation pathway</keyword>
<keyword id="KW-0879">Wnt signaling pathway</keyword>
<keyword id="KW-0862">Zinc</keyword>
<keyword id="KW-0863">Zinc-finger</keyword>
<protein>
    <recommendedName>
        <fullName evidence="7">E3 ubiquitin-protein ligase RNF138</fullName>
        <ecNumber evidence="7">2.3.2.27</ecNumber>
    </recommendedName>
    <alternativeName>
        <fullName evidence="7">RING finger protein 138</fullName>
    </alternativeName>
    <alternativeName>
        <fullName evidence="7">RING-type E3 ubiquitin transferase RNF138</fullName>
    </alternativeName>
</protein>
<gene>
    <name evidence="8" type="primary">Rnf138</name>
    <name evidence="6" type="ORF">RSD-4</name>
</gene>
<proteinExistence type="evidence at transcript level"/>
<comment type="function">
    <text evidence="1">E3 ubiquitin-protein ligase involved in DNA damage response by promoting DNA resection and homologous recombination. Recruited to sites of double-strand breaks following DNA damage and specifically promotes double-strand break repair via homologous recombination. Two different, non-exclusive, mechanisms have been proposed. According to a report, regulates the choice of double-strand break repair by favoring homologous recombination over non-homologous end joining (NHEJ): acts by mediating ubiquitination of XRCC5/Ku80, leading to remove the Ku complex from DNA breaks, thereby promoting homologous recombination. According to another report, cooperates with UBE2Ds E2 ubiquitin ligases (UBE2D1, UBE2D2, UBE2D3 or UBE2D4) to promote homologous recombination by mediating ubiquitination of RBBP8/CtIP. Together with NLK, involved in the ubiquitination and degradation of TCF/LEF. Also exhibits auto-ubiquitination activity in combination with UBE2K. May act as a negative regulator in the Wnt/beta-catenin-mediated signaling pathway.</text>
</comment>
<comment type="catalytic activity">
    <reaction evidence="7">
        <text>S-ubiquitinyl-[E2 ubiquitin-conjugating enzyme]-L-cysteine + [acceptor protein]-L-lysine = [E2 ubiquitin-conjugating enzyme]-L-cysteine + N(6)-ubiquitinyl-[acceptor protein]-L-lysine.</text>
        <dbReference type="EC" id="2.3.2.27"/>
    </reaction>
</comment>
<comment type="pathway">
    <text evidence="1">Protein modification; protein ubiquitination.</text>
</comment>
<comment type="subunit">
    <text evidence="1">Interacts with NLK. Interacts with XRCC5/Ku80. Interacts with RBBP8/CtIP.</text>
</comment>
<comment type="subcellular location">
    <subcellularLocation>
        <location evidence="1">Chromosome</location>
    </subcellularLocation>
    <text evidence="1">Recruited at DNA damage sites. Localizes to sites of double-strand break: localization to double-strand break sites is mediated by the zinc fingers.</text>
</comment>
<comment type="domain">
    <text evidence="1">The zinc finger domains (C2H2-type and C2HC-type zinc fingers) bind DNA and mediate recruitment to double-strand break sites. They show strong preference for DNA with 5'- or 3'-single-stranded overhangs, while they do not bind blunt-ended double-stranded DNA or poly(ADP-ribose) (PAR) polymers.</text>
</comment>
<comment type="PTM">
    <text evidence="1">Auto-ubiquitinated.</text>
</comment>
<name>RN138_RAT</name>
<dbReference type="EC" id="2.3.2.27" evidence="7"/>
<dbReference type="EMBL" id="AF315468">
    <property type="protein sequence ID" value="AAK11282.1"/>
    <property type="molecule type" value="mRNA"/>
</dbReference>
<dbReference type="EMBL" id="BC061821">
    <property type="protein sequence ID" value="AAH61821.1"/>
    <property type="molecule type" value="mRNA"/>
</dbReference>
<dbReference type="RefSeq" id="NP_446040.1">
    <property type="nucleotide sequence ID" value="NM_053588.3"/>
</dbReference>
<dbReference type="RefSeq" id="XP_038953129.1">
    <property type="nucleotide sequence ID" value="XM_039097201.2"/>
</dbReference>
<dbReference type="SMR" id="Q99PD2"/>
<dbReference type="BioGRID" id="250176">
    <property type="interactions" value="2"/>
</dbReference>
<dbReference type="FunCoup" id="Q99PD2">
    <property type="interactions" value="1571"/>
</dbReference>
<dbReference type="STRING" id="10116.ENSRNOP00000021061"/>
<dbReference type="PhosphoSitePlus" id="Q99PD2"/>
<dbReference type="Ensembl" id="ENSRNOT00000102423.1">
    <property type="protein sequence ID" value="ENSRNOP00000084639.1"/>
    <property type="gene ID" value="ENSRNOG00000015645.7"/>
</dbReference>
<dbReference type="GeneID" id="94196"/>
<dbReference type="KEGG" id="rno:94196"/>
<dbReference type="AGR" id="RGD:621485"/>
<dbReference type="CTD" id="51444"/>
<dbReference type="RGD" id="621485">
    <property type="gene designation" value="Rnf138"/>
</dbReference>
<dbReference type="GeneTree" id="ENSGT00950000182909"/>
<dbReference type="InParanoid" id="Q99PD2"/>
<dbReference type="Reactome" id="R-RNO-983168">
    <property type="pathway name" value="Antigen processing: Ubiquitination &amp; Proteasome degradation"/>
</dbReference>
<dbReference type="UniPathway" id="UPA00143"/>
<dbReference type="PRO" id="PR:Q99PD2"/>
<dbReference type="Proteomes" id="UP000002494">
    <property type="component" value="Chromosome 18"/>
</dbReference>
<dbReference type="GO" id="GO:0098978">
    <property type="term" value="C:glutamatergic synapse"/>
    <property type="evidence" value="ECO:0000314"/>
    <property type="project" value="SynGO"/>
</dbReference>
<dbReference type="GO" id="GO:0098794">
    <property type="term" value="C:postsynapse"/>
    <property type="evidence" value="ECO:0000314"/>
    <property type="project" value="SynGO"/>
</dbReference>
<dbReference type="GO" id="GO:0098793">
    <property type="term" value="C:presynapse"/>
    <property type="evidence" value="ECO:0000314"/>
    <property type="project" value="SynGO"/>
</dbReference>
<dbReference type="GO" id="GO:0035861">
    <property type="term" value="C:site of double-strand break"/>
    <property type="evidence" value="ECO:0000250"/>
    <property type="project" value="UniProtKB"/>
</dbReference>
<dbReference type="GO" id="GO:0019901">
    <property type="term" value="F:protein kinase binding"/>
    <property type="evidence" value="ECO:0000266"/>
    <property type="project" value="RGD"/>
</dbReference>
<dbReference type="GO" id="GO:0003697">
    <property type="term" value="F:single-stranded DNA binding"/>
    <property type="evidence" value="ECO:0000250"/>
    <property type="project" value="UniProtKB"/>
</dbReference>
<dbReference type="GO" id="GO:0061630">
    <property type="term" value="F:ubiquitin protein ligase activity"/>
    <property type="evidence" value="ECO:0000250"/>
    <property type="project" value="UniProtKB"/>
</dbReference>
<dbReference type="GO" id="GO:0008270">
    <property type="term" value="F:zinc ion binding"/>
    <property type="evidence" value="ECO:0007669"/>
    <property type="project" value="UniProtKB-KW"/>
</dbReference>
<dbReference type="GO" id="GO:1990830">
    <property type="term" value="P:cellular response to leukemia inhibitory factor"/>
    <property type="evidence" value="ECO:0000266"/>
    <property type="project" value="RGD"/>
</dbReference>
<dbReference type="GO" id="GO:0010792">
    <property type="term" value="P:DNA double-strand break processing involved in repair via single-strand annealing"/>
    <property type="evidence" value="ECO:0000250"/>
    <property type="project" value="UniProtKB"/>
</dbReference>
<dbReference type="GO" id="GO:0000724">
    <property type="term" value="P:double-strand break repair via homologous recombination"/>
    <property type="evidence" value="ECO:0000250"/>
    <property type="project" value="UniProtKB"/>
</dbReference>
<dbReference type="GO" id="GO:0016567">
    <property type="term" value="P:protein ubiquitination"/>
    <property type="evidence" value="ECO:0000250"/>
    <property type="project" value="UniProtKB"/>
</dbReference>
<dbReference type="GO" id="GO:0016055">
    <property type="term" value="P:Wnt signaling pathway"/>
    <property type="evidence" value="ECO:0007669"/>
    <property type="project" value="UniProtKB-KW"/>
</dbReference>
<dbReference type="CDD" id="cd16544">
    <property type="entry name" value="RING-HC_RNF138"/>
    <property type="match status" value="1"/>
</dbReference>
<dbReference type="FunFam" id="3.30.40.10:FF:000267">
    <property type="entry name" value="E3 ubiquitin-protein ligase RNF138 isoform X1"/>
    <property type="match status" value="1"/>
</dbReference>
<dbReference type="Gene3D" id="3.30.40.10">
    <property type="entry name" value="Zinc/RING finger domain, C3HC4 (zinc finger)"/>
    <property type="match status" value="1"/>
</dbReference>
<dbReference type="InterPro" id="IPR052498">
    <property type="entry name" value="E3_ubiq-protein_ligase_RNF138"/>
</dbReference>
<dbReference type="InterPro" id="IPR034734">
    <property type="entry name" value="ZF_C2HC_RNF"/>
</dbReference>
<dbReference type="InterPro" id="IPR001841">
    <property type="entry name" value="Znf_RING"/>
</dbReference>
<dbReference type="InterPro" id="IPR013083">
    <property type="entry name" value="Znf_RING/FYVE/PHD"/>
</dbReference>
<dbReference type="PANTHER" id="PTHR46968">
    <property type="entry name" value="E3 UBIQUITIN-PROTEIN LIGASE RNF138"/>
    <property type="match status" value="1"/>
</dbReference>
<dbReference type="PANTHER" id="PTHR46968:SF2">
    <property type="entry name" value="E3 UBIQUITIN-PROTEIN LIGASE RNF138"/>
    <property type="match status" value="1"/>
</dbReference>
<dbReference type="Pfam" id="PF13923">
    <property type="entry name" value="zf-C3HC4_2"/>
    <property type="match status" value="1"/>
</dbReference>
<dbReference type="Pfam" id="PF18574">
    <property type="entry name" value="zf_C2HC_14"/>
    <property type="match status" value="1"/>
</dbReference>
<dbReference type="SMART" id="SM00184">
    <property type="entry name" value="RING"/>
    <property type="match status" value="1"/>
</dbReference>
<dbReference type="SUPFAM" id="SSF57850">
    <property type="entry name" value="RING/U-box"/>
    <property type="match status" value="1"/>
</dbReference>
<dbReference type="PROSITE" id="PS51803">
    <property type="entry name" value="ZF_C2HC_RNF"/>
    <property type="match status" value="1"/>
</dbReference>
<dbReference type="PROSITE" id="PS50089">
    <property type="entry name" value="ZF_RING_2"/>
    <property type="match status" value="1"/>
</dbReference>